<protein>
    <recommendedName>
        <fullName evidence="1">Siroheme synthase</fullName>
    </recommendedName>
    <domain>
        <recommendedName>
            <fullName evidence="1">Uroporphyrinogen-III C-methyltransferase</fullName>
            <shortName evidence="1">Urogen III methylase</shortName>
            <ecNumber evidence="1">2.1.1.107</ecNumber>
        </recommendedName>
        <alternativeName>
            <fullName evidence="1">SUMT</fullName>
        </alternativeName>
        <alternativeName>
            <fullName evidence="1">Uroporphyrinogen III methylase</fullName>
            <shortName evidence="1">UROM</shortName>
        </alternativeName>
    </domain>
    <domain>
        <recommendedName>
            <fullName evidence="1">Precorrin-2 dehydrogenase</fullName>
            <ecNumber evidence="1">1.3.1.76</ecNumber>
        </recommendedName>
    </domain>
    <domain>
        <recommendedName>
            <fullName evidence="1">Sirohydrochlorin ferrochelatase</fullName>
            <ecNumber evidence="1">4.99.1.4</ecNumber>
        </recommendedName>
    </domain>
</protein>
<dbReference type="EC" id="2.1.1.107" evidence="1"/>
<dbReference type="EC" id="1.3.1.76" evidence="1"/>
<dbReference type="EC" id="4.99.1.4" evidence="1"/>
<dbReference type="EMBL" id="AE014075">
    <property type="protein sequence ID" value="AAN82582.1"/>
    <property type="molecule type" value="Genomic_DNA"/>
</dbReference>
<dbReference type="RefSeq" id="WP_000349860.1">
    <property type="nucleotide sequence ID" value="NZ_CP051263.1"/>
</dbReference>
<dbReference type="SMR" id="Q8FCW8"/>
<dbReference type="STRING" id="199310.c4144"/>
<dbReference type="KEGG" id="ecc:c4144"/>
<dbReference type="eggNOG" id="COG0007">
    <property type="taxonomic scope" value="Bacteria"/>
</dbReference>
<dbReference type="eggNOG" id="COG1648">
    <property type="taxonomic scope" value="Bacteria"/>
</dbReference>
<dbReference type="HOGENOM" id="CLU_011276_2_0_6"/>
<dbReference type="BioCyc" id="ECOL199310:C4144-MONOMER"/>
<dbReference type="UniPathway" id="UPA00148">
    <property type="reaction ID" value="UER00211"/>
</dbReference>
<dbReference type="UniPathway" id="UPA00148">
    <property type="reaction ID" value="UER00222"/>
</dbReference>
<dbReference type="UniPathway" id="UPA00262">
    <property type="reaction ID" value="UER00211"/>
</dbReference>
<dbReference type="UniPathway" id="UPA00262">
    <property type="reaction ID" value="UER00222"/>
</dbReference>
<dbReference type="UniPathway" id="UPA00262">
    <property type="reaction ID" value="UER00376"/>
</dbReference>
<dbReference type="Proteomes" id="UP000001410">
    <property type="component" value="Chromosome"/>
</dbReference>
<dbReference type="GO" id="GO:0051287">
    <property type="term" value="F:NAD binding"/>
    <property type="evidence" value="ECO:0007669"/>
    <property type="project" value="InterPro"/>
</dbReference>
<dbReference type="GO" id="GO:0043115">
    <property type="term" value="F:precorrin-2 dehydrogenase activity"/>
    <property type="evidence" value="ECO:0007669"/>
    <property type="project" value="UniProtKB-UniRule"/>
</dbReference>
<dbReference type="GO" id="GO:0051266">
    <property type="term" value="F:sirohydrochlorin ferrochelatase activity"/>
    <property type="evidence" value="ECO:0007669"/>
    <property type="project" value="UniProtKB-EC"/>
</dbReference>
<dbReference type="GO" id="GO:0004851">
    <property type="term" value="F:uroporphyrin-III C-methyltransferase activity"/>
    <property type="evidence" value="ECO:0007669"/>
    <property type="project" value="UniProtKB-UniRule"/>
</dbReference>
<dbReference type="GO" id="GO:0009236">
    <property type="term" value="P:cobalamin biosynthetic process"/>
    <property type="evidence" value="ECO:0007669"/>
    <property type="project" value="UniProtKB-UniRule"/>
</dbReference>
<dbReference type="GO" id="GO:0032259">
    <property type="term" value="P:methylation"/>
    <property type="evidence" value="ECO:0007669"/>
    <property type="project" value="UniProtKB-KW"/>
</dbReference>
<dbReference type="GO" id="GO:0019354">
    <property type="term" value="P:siroheme biosynthetic process"/>
    <property type="evidence" value="ECO:0007669"/>
    <property type="project" value="UniProtKB-UniRule"/>
</dbReference>
<dbReference type="CDD" id="cd11642">
    <property type="entry name" value="SUMT"/>
    <property type="match status" value="1"/>
</dbReference>
<dbReference type="FunFam" id="1.10.8.210:FF:000001">
    <property type="entry name" value="Siroheme synthase"/>
    <property type="match status" value="1"/>
</dbReference>
<dbReference type="FunFam" id="3.30.160.110:FF:000001">
    <property type="entry name" value="Siroheme synthase"/>
    <property type="match status" value="1"/>
</dbReference>
<dbReference type="FunFam" id="3.30.950.10:FF:000001">
    <property type="entry name" value="Siroheme synthase"/>
    <property type="match status" value="1"/>
</dbReference>
<dbReference type="FunFam" id="3.40.1010.10:FF:000001">
    <property type="entry name" value="Siroheme synthase"/>
    <property type="match status" value="1"/>
</dbReference>
<dbReference type="FunFam" id="3.40.50.720:FF:000092">
    <property type="entry name" value="Siroheme synthase"/>
    <property type="match status" value="1"/>
</dbReference>
<dbReference type="Gene3D" id="3.40.1010.10">
    <property type="entry name" value="Cobalt-precorrin-4 Transmethylase, Domain 1"/>
    <property type="match status" value="1"/>
</dbReference>
<dbReference type="Gene3D" id="3.30.950.10">
    <property type="entry name" value="Methyltransferase, Cobalt-precorrin-4 Transmethylase, Domain 2"/>
    <property type="match status" value="1"/>
</dbReference>
<dbReference type="Gene3D" id="3.40.50.720">
    <property type="entry name" value="NAD(P)-binding Rossmann-like Domain"/>
    <property type="match status" value="1"/>
</dbReference>
<dbReference type="Gene3D" id="1.10.8.210">
    <property type="entry name" value="Sirohaem synthase, dimerisation domain"/>
    <property type="match status" value="1"/>
</dbReference>
<dbReference type="Gene3D" id="3.30.160.110">
    <property type="entry name" value="Siroheme synthase, domain 2"/>
    <property type="match status" value="1"/>
</dbReference>
<dbReference type="HAMAP" id="MF_01646">
    <property type="entry name" value="Siroheme_synth"/>
    <property type="match status" value="1"/>
</dbReference>
<dbReference type="InterPro" id="IPR000878">
    <property type="entry name" value="4pyrrol_Mease"/>
</dbReference>
<dbReference type="InterPro" id="IPR035996">
    <property type="entry name" value="4pyrrol_Methylase_sf"/>
</dbReference>
<dbReference type="InterPro" id="IPR014777">
    <property type="entry name" value="4pyrrole_Mease_sub1"/>
</dbReference>
<dbReference type="InterPro" id="IPR014776">
    <property type="entry name" value="4pyrrole_Mease_sub2"/>
</dbReference>
<dbReference type="InterPro" id="IPR006366">
    <property type="entry name" value="CobA/CysG_C"/>
</dbReference>
<dbReference type="InterPro" id="IPR036291">
    <property type="entry name" value="NAD(P)-bd_dom_sf"/>
</dbReference>
<dbReference type="InterPro" id="IPR050161">
    <property type="entry name" value="Siro_Cobalamin_biosynth"/>
</dbReference>
<dbReference type="InterPro" id="IPR037115">
    <property type="entry name" value="Sirohaem_synt_dimer_dom_sf"/>
</dbReference>
<dbReference type="InterPro" id="IPR012409">
    <property type="entry name" value="Sirohaem_synth"/>
</dbReference>
<dbReference type="InterPro" id="IPR028281">
    <property type="entry name" value="Sirohaem_synthase_central"/>
</dbReference>
<dbReference type="InterPro" id="IPR019478">
    <property type="entry name" value="Sirohaem_synthase_dimer_dom"/>
</dbReference>
<dbReference type="InterPro" id="IPR006367">
    <property type="entry name" value="Sirohaem_synthase_N"/>
</dbReference>
<dbReference type="InterPro" id="IPR003043">
    <property type="entry name" value="Uropor_MeTrfase_CS"/>
</dbReference>
<dbReference type="NCBIfam" id="TIGR01469">
    <property type="entry name" value="cobA_cysG_Cterm"/>
    <property type="match status" value="1"/>
</dbReference>
<dbReference type="NCBIfam" id="TIGR01470">
    <property type="entry name" value="cysG_Nterm"/>
    <property type="match status" value="1"/>
</dbReference>
<dbReference type="NCBIfam" id="NF004790">
    <property type="entry name" value="PRK06136.1"/>
    <property type="match status" value="1"/>
</dbReference>
<dbReference type="NCBIfam" id="NF007922">
    <property type="entry name" value="PRK10637.1"/>
    <property type="match status" value="1"/>
</dbReference>
<dbReference type="PANTHER" id="PTHR45790:SF1">
    <property type="entry name" value="SIROHEME SYNTHASE"/>
    <property type="match status" value="1"/>
</dbReference>
<dbReference type="PANTHER" id="PTHR45790">
    <property type="entry name" value="SIROHEME SYNTHASE-RELATED"/>
    <property type="match status" value="1"/>
</dbReference>
<dbReference type="Pfam" id="PF10414">
    <property type="entry name" value="CysG_dimeriser"/>
    <property type="match status" value="1"/>
</dbReference>
<dbReference type="Pfam" id="PF13241">
    <property type="entry name" value="NAD_binding_7"/>
    <property type="match status" value="1"/>
</dbReference>
<dbReference type="Pfam" id="PF14824">
    <property type="entry name" value="Sirohm_synth_M"/>
    <property type="match status" value="1"/>
</dbReference>
<dbReference type="Pfam" id="PF00590">
    <property type="entry name" value="TP_methylase"/>
    <property type="match status" value="1"/>
</dbReference>
<dbReference type="PIRSF" id="PIRSF036426">
    <property type="entry name" value="Sirohaem_synth"/>
    <property type="match status" value="1"/>
</dbReference>
<dbReference type="SUPFAM" id="SSF51735">
    <property type="entry name" value="NAD(P)-binding Rossmann-fold domains"/>
    <property type="match status" value="1"/>
</dbReference>
<dbReference type="SUPFAM" id="SSF75615">
    <property type="entry name" value="Siroheme synthase middle domains-like"/>
    <property type="match status" value="1"/>
</dbReference>
<dbReference type="SUPFAM" id="SSF53790">
    <property type="entry name" value="Tetrapyrrole methylase"/>
    <property type="match status" value="1"/>
</dbReference>
<dbReference type="PROSITE" id="PS00839">
    <property type="entry name" value="SUMT_1"/>
    <property type="match status" value="1"/>
</dbReference>
<dbReference type="PROSITE" id="PS00840">
    <property type="entry name" value="SUMT_2"/>
    <property type="match status" value="1"/>
</dbReference>
<sequence>MDHLPIFCQLRDRDCLIVGGGDVAERKARLLLDAGARLTVNALAFIPQFTAWADAGMLTLVEGPFDESLLDTCWLAIAATDDDALNQRVSEAAEARRIFCNVVDAPKAASFIMPSIIDRSPLMVAVSSGGTSPVLARLLREKLESLLPLHLGQVAKYAGQLRGRVKQQFATMGERRRFWEKLFVNDRLAQSLANNDQKAITETTEQLINEPLDHRGEVVLVGAGPGDAGLLTLKGLQQIQQADVVVYDRLVSDDIMNLVRRDADRVFVGKRAGYHCVPQEEINQILLREAQKGKRVVRLKGGDPFIFGRGGEELETLCNAGIPFSVVPGITAASGCSAYSGIPLTHRDYAQSVRLITGHLKTGGELDWENLAAEKQTLVFYMGLNQAATIQQKLIEYGMPGEMPVAIVENGTAVTQRVIDGTLTQLGELAQQMNSPSLIIIGRVVGLRDKLNWFSNH</sequence>
<reference key="1">
    <citation type="journal article" date="2002" name="Proc. Natl. Acad. Sci. U.S.A.">
        <title>Extensive mosaic structure revealed by the complete genome sequence of uropathogenic Escherichia coli.</title>
        <authorList>
            <person name="Welch R.A."/>
            <person name="Burland V."/>
            <person name="Plunkett G. III"/>
            <person name="Redford P."/>
            <person name="Roesch P."/>
            <person name="Rasko D."/>
            <person name="Buckles E.L."/>
            <person name="Liou S.-R."/>
            <person name="Boutin A."/>
            <person name="Hackett J."/>
            <person name="Stroud D."/>
            <person name="Mayhew G.F."/>
            <person name="Rose D.J."/>
            <person name="Zhou S."/>
            <person name="Schwartz D.C."/>
            <person name="Perna N.T."/>
            <person name="Mobley H.L.T."/>
            <person name="Donnenberg M.S."/>
            <person name="Blattner F.R."/>
        </authorList>
    </citation>
    <scope>NUCLEOTIDE SEQUENCE [LARGE SCALE GENOMIC DNA]</scope>
    <source>
        <strain>CFT073 / ATCC 700928 / UPEC</strain>
    </source>
</reference>
<comment type="function">
    <text evidence="1">Multifunctional enzyme that catalyzes the SAM-dependent methylations of uroporphyrinogen III at position C-2 and C-7 to form precorrin-2 via precorrin-1. Then it catalyzes the NAD-dependent ring dehydrogenation of precorrin-2 to yield sirohydrochlorin. Finally, it catalyzes the ferrochelation of sirohydrochlorin to yield siroheme.</text>
</comment>
<comment type="catalytic activity">
    <reaction evidence="1">
        <text>uroporphyrinogen III + 2 S-adenosyl-L-methionine = precorrin-2 + 2 S-adenosyl-L-homocysteine + H(+)</text>
        <dbReference type="Rhea" id="RHEA:32459"/>
        <dbReference type="ChEBI" id="CHEBI:15378"/>
        <dbReference type="ChEBI" id="CHEBI:57308"/>
        <dbReference type="ChEBI" id="CHEBI:57856"/>
        <dbReference type="ChEBI" id="CHEBI:58827"/>
        <dbReference type="ChEBI" id="CHEBI:59789"/>
        <dbReference type="EC" id="2.1.1.107"/>
    </reaction>
</comment>
<comment type="catalytic activity">
    <reaction evidence="1">
        <text>precorrin-2 + NAD(+) = sirohydrochlorin + NADH + 2 H(+)</text>
        <dbReference type="Rhea" id="RHEA:15613"/>
        <dbReference type="ChEBI" id="CHEBI:15378"/>
        <dbReference type="ChEBI" id="CHEBI:57540"/>
        <dbReference type="ChEBI" id="CHEBI:57945"/>
        <dbReference type="ChEBI" id="CHEBI:58351"/>
        <dbReference type="ChEBI" id="CHEBI:58827"/>
        <dbReference type="EC" id="1.3.1.76"/>
    </reaction>
</comment>
<comment type="catalytic activity">
    <reaction evidence="1">
        <text>siroheme + 2 H(+) = sirohydrochlorin + Fe(2+)</text>
        <dbReference type="Rhea" id="RHEA:24360"/>
        <dbReference type="ChEBI" id="CHEBI:15378"/>
        <dbReference type="ChEBI" id="CHEBI:29033"/>
        <dbReference type="ChEBI" id="CHEBI:58351"/>
        <dbReference type="ChEBI" id="CHEBI:60052"/>
        <dbReference type="EC" id="4.99.1.4"/>
    </reaction>
</comment>
<comment type="pathway">
    <text evidence="1">Cofactor biosynthesis; adenosylcobalamin biosynthesis; precorrin-2 from uroporphyrinogen III: step 1/1.</text>
</comment>
<comment type="pathway">
    <text evidence="1">Cofactor biosynthesis; adenosylcobalamin biosynthesis; sirohydrochlorin from precorrin-2: step 1/1.</text>
</comment>
<comment type="pathway">
    <text evidence="1">Porphyrin-containing compound metabolism; siroheme biosynthesis; precorrin-2 from uroporphyrinogen III: step 1/1.</text>
</comment>
<comment type="pathway">
    <text evidence="1">Porphyrin-containing compound metabolism; siroheme biosynthesis; siroheme from sirohydrochlorin: step 1/1.</text>
</comment>
<comment type="pathway">
    <text evidence="1">Porphyrin-containing compound metabolism; siroheme biosynthesis; sirohydrochlorin from precorrin-2: step 1/1.</text>
</comment>
<comment type="similarity">
    <text evidence="1">In the N-terminal section; belongs to the precorrin-2 dehydrogenase / sirohydrochlorin ferrochelatase family.</text>
</comment>
<comment type="similarity">
    <text evidence="1">In the C-terminal section; belongs to the precorrin methyltransferase family.</text>
</comment>
<accession>Q8FCW8</accession>
<name>CYSG_ECOL6</name>
<organism>
    <name type="scientific">Escherichia coli O6:H1 (strain CFT073 / ATCC 700928 / UPEC)</name>
    <dbReference type="NCBI Taxonomy" id="199310"/>
    <lineage>
        <taxon>Bacteria</taxon>
        <taxon>Pseudomonadati</taxon>
        <taxon>Pseudomonadota</taxon>
        <taxon>Gammaproteobacteria</taxon>
        <taxon>Enterobacterales</taxon>
        <taxon>Enterobacteriaceae</taxon>
        <taxon>Escherichia</taxon>
    </lineage>
</organism>
<keyword id="KW-0169">Cobalamin biosynthesis</keyword>
<keyword id="KW-0456">Lyase</keyword>
<keyword id="KW-0489">Methyltransferase</keyword>
<keyword id="KW-0511">Multifunctional enzyme</keyword>
<keyword id="KW-0520">NAD</keyword>
<keyword id="KW-0560">Oxidoreductase</keyword>
<keyword id="KW-0597">Phosphoprotein</keyword>
<keyword id="KW-0627">Porphyrin biosynthesis</keyword>
<keyword id="KW-1185">Reference proteome</keyword>
<keyword id="KW-0949">S-adenosyl-L-methionine</keyword>
<keyword id="KW-0808">Transferase</keyword>
<feature type="chain" id="PRO_0000330510" description="Siroheme synthase">
    <location>
        <begin position="1"/>
        <end position="457"/>
    </location>
</feature>
<feature type="region of interest" description="Precorrin-2 dehydrogenase /sirohydrochlorin ferrochelatase" evidence="1">
    <location>
        <begin position="1"/>
        <end position="204"/>
    </location>
</feature>
<feature type="region of interest" description="Uroporphyrinogen-III C-methyltransferase" evidence="1">
    <location>
        <begin position="216"/>
        <end position="457"/>
    </location>
</feature>
<feature type="active site" description="Proton acceptor" evidence="1">
    <location>
        <position position="248"/>
    </location>
</feature>
<feature type="active site" description="Proton donor" evidence="1">
    <location>
        <position position="270"/>
    </location>
</feature>
<feature type="binding site" evidence="1">
    <location>
        <begin position="22"/>
        <end position="23"/>
    </location>
    <ligand>
        <name>NAD(+)</name>
        <dbReference type="ChEBI" id="CHEBI:57540"/>
    </ligand>
</feature>
<feature type="binding site" evidence="1">
    <location>
        <begin position="43"/>
        <end position="44"/>
    </location>
    <ligand>
        <name>NAD(+)</name>
        <dbReference type="ChEBI" id="CHEBI:57540"/>
    </ligand>
</feature>
<feature type="binding site" evidence="1">
    <location>
        <position position="225"/>
    </location>
    <ligand>
        <name>S-adenosyl-L-methionine</name>
        <dbReference type="ChEBI" id="CHEBI:59789"/>
    </ligand>
</feature>
<feature type="binding site" evidence="1">
    <location>
        <begin position="301"/>
        <end position="303"/>
    </location>
    <ligand>
        <name>S-adenosyl-L-methionine</name>
        <dbReference type="ChEBI" id="CHEBI:59789"/>
    </ligand>
</feature>
<feature type="binding site" evidence="1">
    <location>
        <position position="306"/>
    </location>
    <ligand>
        <name>S-adenosyl-L-methionine</name>
        <dbReference type="ChEBI" id="CHEBI:59789"/>
    </ligand>
</feature>
<feature type="binding site" evidence="1">
    <location>
        <begin position="331"/>
        <end position="332"/>
    </location>
    <ligand>
        <name>S-adenosyl-L-methionine</name>
        <dbReference type="ChEBI" id="CHEBI:59789"/>
    </ligand>
</feature>
<feature type="binding site" evidence="1">
    <location>
        <position position="382"/>
    </location>
    <ligand>
        <name>S-adenosyl-L-methionine</name>
        <dbReference type="ChEBI" id="CHEBI:59789"/>
    </ligand>
</feature>
<feature type="binding site" evidence="1">
    <location>
        <position position="411"/>
    </location>
    <ligand>
        <name>S-adenosyl-L-methionine</name>
        <dbReference type="ChEBI" id="CHEBI:59789"/>
    </ligand>
</feature>
<feature type="modified residue" description="Phosphoserine" evidence="1">
    <location>
        <position position="128"/>
    </location>
</feature>
<evidence type="ECO:0000255" key="1">
    <source>
        <dbReference type="HAMAP-Rule" id="MF_01646"/>
    </source>
</evidence>
<gene>
    <name evidence="1" type="primary">cysG</name>
    <name type="ordered locus">c4144</name>
</gene>
<proteinExistence type="inferred from homology"/>